<keyword id="KW-0002">3D-structure</keyword>
<keyword id="KW-0225">Disease variant</keyword>
<keyword id="KW-0349">Heme</keyword>
<keyword id="KW-0408">Iron</keyword>
<keyword id="KW-0443">Lipid metabolism</keyword>
<keyword id="KW-0472">Membrane</keyword>
<keyword id="KW-0479">Metal-binding</keyword>
<keyword id="KW-0496">Mitochondrion</keyword>
<keyword id="KW-0999">Mitochondrion inner membrane</keyword>
<keyword id="KW-0503">Monooxygenase</keyword>
<keyword id="KW-0560">Oxidoreductase</keyword>
<keyword id="KW-1267">Proteomics identification</keyword>
<keyword id="KW-1185">Reference proteome</keyword>
<keyword id="KW-0753">Steroid metabolism</keyword>
<keyword id="KW-0755">Steroidogenesis</keyword>
<keyword id="KW-0809">Transit peptide</keyword>
<dbReference type="EC" id="1.14.15.5" evidence="6 11 12 17 23"/>
<dbReference type="EC" id="1.14.15.4" evidence="6 7 10 13 17"/>
<dbReference type="EMBL" id="M32881">
    <property type="protein sequence ID" value="AAA35741.1"/>
    <property type="molecule type" value="Genomic_DNA"/>
</dbReference>
<dbReference type="EMBL" id="M32864">
    <property type="protein sequence ID" value="AAA35741.1"/>
    <property type="status" value="JOINED"/>
    <property type="molecule type" value="Genomic_DNA"/>
</dbReference>
<dbReference type="EMBL" id="M32880">
    <property type="protein sequence ID" value="AAA35741.1"/>
    <property type="status" value="JOINED"/>
    <property type="molecule type" value="Genomic_DNA"/>
</dbReference>
<dbReference type="EMBL" id="X54741">
    <property type="protein sequence ID" value="CAA38539.1"/>
    <property type="molecule type" value="mRNA"/>
</dbReference>
<dbReference type="EMBL" id="D13752">
    <property type="protein sequence ID" value="BAA02899.1"/>
    <property type="molecule type" value="Genomic_DNA"/>
</dbReference>
<dbReference type="EMBL" id="EU326306">
    <property type="protein sequence ID" value="ACA05912.1"/>
    <property type="molecule type" value="Genomic_DNA"/>
</dbReference>
<dbReference type="EMBL" id="CH471162">
    <property type="protein sequence ID" value="EAW82292.1"/>
    <property type="molecule type" value="Genomic_DNA"/>
</dbReference>
<dbReference type="CCDS" id="CCDS6393.1"/>
<dbReference type="PIR" id="B34181">
    <property type="entry name" value="B34181"/>
</dbReference>
<dbReference type="RefSeq" id="NP_000489.3">
    <property type="nucleotide sequence ID" value="NM_000498.3"/>
</dbReference>
<dbReference type="PDB" id="4DVQ">
    <property type="method" value="X-ray"/>
    <property type="resolution" value="2.49 A"/>
    <property type="chains" value="A/B/C/D/E/F/G/H/I/J/K/L=34-503"/>
</dbReference>
<dbReference type="PDB" id="4FDH">
    <property type="method" value="X-ray"/>
    <property type="resolution" value="2.71 A"/>
    <property type="chains" value="A/B/C/D/E/F/G/H/I/J/K/L=34-503"/>
</dbReference>
<dbReference type="PDB" id="4ZGX">
    <property type="method" value="X-ray"/>
    <property type="resolution" value="3.20 A"/>
    <property type="chains" value="A/B/C/D/E/F/G/H/I/J/K/L=28-503"/>
</dbReference>
<dbReference type="PDB" id="6XZ8">
    <property type="method" value="X-ray"/>
    <property type="resolution" value="3.00 A"/>
    <property type="chains" value="A/B/C=28-503"/>
</dbReference>
<dbReference type="PDB" id="6XZ9">
    <property type="method" value="X-ray"/>
    <property type="resolution" value="2.77 A"/>
    <property type="chains" value="A/B/C=28-503"/>
</dbReference>
<dbReference type="PDB" id="7M8I">
    <property type="method" value="X-ray"/>
    <property type="resolution" value="2.94 A"/>
    <property type="chains" value="A/B/C=31-503"/>
</dbReference>
<dbReference type="PDB" id="7M8V">
    <property type="method" value="X-ray"/>
    <property type="resolution" value="3.08 A"/>
    <property type="chains" value="A/B/C/D/E/F/G/H/I/J/K/L=31-503"/>
</dbReference>
<dbReference type="PDBsum" id="4DVQ"/>
<dbReference type="PDBsum" id="4FDH"/>
<dbReference type="PDBsum" id="4ZGX"/>
<dbReference type="PDBsum" id="6XZ8"/>
<dbReference type="PDBsum" id="6XZ9"/>
<dbReference type="PDBsum" id="7M8I"/>
<dbReference type="PDBsum" id="7M8V"/>
<dbReference type="SMR" id="P19099"/>
<dbReference type="BioGRID" id="107957">
    <property type="interactions" value="7"/>
</dbReference>
<dbReference type="FunCoup" id="P19099">
    <property type="interactions" value="130"/>
</dbReference>
<dbReference type="STRING" id="9606.ENSP00000325822"/>
<dbReference type="BindingDB" id="P19099"/>
<dbReference type="ChEMBL" id="CHEMBL2722"/>
<dbReference type="DrugBank" id="DB04630">
    <property type="generic name" value="Aldosterone"/>
</dbReference>
<dbReference type="DrugBank" id="DB19090">
    <property type="generic name" value="Baxdrostat"/>
</dbReference>
<dbReference type="DrugBank" id="DB00700">
    <property type="generic name" value="Eplerenone"/>
</dbReference>
<dbReference type="DrugBank" id="DB00292">
    <property type="generic name" value="Etomidate"/>
</dbReference>
<dbReference type="DrugBank" id="DB00741">
    <property type="generic name" value="Hydrocortisone"/>
</dbReference>
<dbReference type="DrugBank" id="DB14539">
    <property type="generic name" value="Hydrocortisone acetate"/>
</dbReference>
<dbReference type="DrugBank" id="DB14540">
    <property type="generic name" value="Hydrocortisone butyrate"/>
</dbReference>
<dbReference type="DrugBank" id="DB14543">
    <property type="generic name" value="Hydrocortisone probutate"/>
</dbReference>
<dbReference type="DrugBank" id="DB14545">
    <property type="generic name" value="Hydrocortisone succinate"/>
</dbReference>
<dbReference type="DrugBank" id="DB14544">
    <property type="generic name" value="Hydrocortisone valerate"/>
</dbReference>
<dbReference type="DrugBank" id="DB05667">
    <property type="generic name" value="Levoketoconazole"/>
</dbReference>
<dbReference type="DrugBank" id="DB01011">
    <property type="generic name" value="Metyrapone"/>
</dbReference>
<dbReference type="DrugBank" id="DB01388">
    <property type="generic name" value="Mibefradil"/>
</dbReference>
<dbReference type="DrugBank" id="DB11837">
    <property type="generic name" value="Osilodrostat"/>
</dbReference>
<dbReference type="DrugBank" id="DB00421">
    <property type="generic name" value="Spironolactone"/>
</dbReference>
<dbReference type="DrugBank" id="DB06281">
    <property type="generic name" value="Torcetrapib"/>
</dbReference>
<dbReference type="DrugCentral" id="P19099"/>
<dbReference type="GuidetoPHARMACOLOGY" id="1360"/>
<dbReference type="SwissLipids" id="SLP:000001198"/>
<dbReference type="iPTMnet" id="P19099"/>
<dbReference type="PhosphoSitePlus" id="P19099"/>
<dbReference type="BioMuta" id="CYP11B2"/>
<dbReference type="DMDM" id="3041666"/>
<dbReference type="MassIVE" id="P19099"/>
<dbReference type="PaxDb" id="9606-ENSP00000325822"/>
<dbReference type="PeptideAtlas" id="P19099"/>
<dbReference type="ProteomicsDB" id="53632"/>
<dbReference type="Antibodypedia" id="14554">
    <property type="antibodies" value="237 antibodies from 33 providers"/>
</dbReference>
<dbReference type="DNASU" id="1585"/>
<dbReference type="Ensembl" id="ENST00000323110.2">
    <property type="protein sequence ID" value="ENSP00000325822.2"/>
    <property type="gene ID" value="ENSG00000179142.2"/>
</dbReference>
<dbReference type="GeneID" id="1585"/>
<dbReference type="KEGG" id="hsa:1585"/>
<dbReference type="MANE-Select" id="ENST00000323110.2">
    <property type="protein sequence ID" value="ENSP00000325822.2"/>
    <property type="RefSeq nucleotide sequence ID" value="NM_000498.3"/>
    <property type="RefSeq protein sequence ID" value="NP_000489.3"/>
</dbReference>
<dbReference type="UCSC" id="uc003yxk.1">
    <property type="organism name" value="human"/>
</dbReference>
<dbReference type="AGR" id="HGNC:2592"/>
<dbReference type="CTD" id="1585"/>
<dbReference type="DisGeNET" id="1585"/>
<dbReference type="GeneCards" id="CYP11B2"/>
<dbReference type="HGNC" id="HGNC:2592">
    <property type="gene designation" value="CYP11B2"/>
</dbReference>
<dbReference type="HPA" id="ENSG00000179142">
    <property type="expression patterns" value="Tissue enriched (adrenal)"/>
</dbReference>
<dbReference type="MalaCards" id="CYP11B2"/>
<dbReference type="MIM" id="124080">
    <property type="type" value="gene"/>
</dbReference>
<dbReference type="MIM" id="203400">
    <property type="type" value="phenotype"/>
</dbReference>
<dbReference type="MIM" id="610600">
    <property type="type" value="phenotype"/>
</dbReference>
<dbReference type="neXtProt" id="NX_P19099"/>
<dbReference type="OpenTargets" id="ENSG00000179142"/>
<dbReference type="Orphanet" id="556030">
    <property type="disease" value="Early-onset familial hypoaldosteronism"/>
</dbReference>
<dbReference type="Orphanet" id="403">
    <property type="disease" value="Familial hyperaldosteronism type I"/>
</dbReference>
<dbReference type="PharmGKB" id="PA134"/>
<dbReference type="VEuPathDB" id="HostDB:ENSG00000179142"/>
<dbReference type="eggNOG" id="KOG0159">
    <property type="taxonomic scope" value="Eukaryota"/>
</dbReference>
<dbReference type="GeneTree" id="ENSGT00940000163354"/>
<dbReference type="HOGENOM" id="CLU_001570_28_4_1"/>
<dbReference type="InParanoid" id="P19099"/>
<dbReference type="OMA" id="ESTHPCR"/>
<dbReference type="OrthoDB" id="3945418at2759"/>
<dbReference type="PAN-GO" id="P19099">
    <property type="GO annotations" value="8 GO annotations based on evolutionary models"/>
</dbReference>
<dbReference type="PhylomeDB" id="P19099"/>
<dbReference type="TreeFam" id="TF105094"/>
<dbReference type="BioCyc" id="MetaCyc:HS11355-MONOMER"/>
<dbReference type="BRENDA" id="1.14.15.4">
    <property type="organism ID" value="2681"/>
</dbReference>
<dbReference type="BRENDA" id="1.14.15.5">
    <property type="organism ID" value="2681"/>
</dbReference>
<dbReference type="PathwayCommons" id="P19099"/>
<dbReference type="Reactome" id="R-HSA-193993">
    <property type="pathway name" value="Mineralocorticoid biosynthesis"/>
</dbReference>
<dbReference type="Reactome" id="R-HSA-194002">
    <property type="pathway name" value="Glucocorticoid biosynthesis"/>
</dbReference>
<dbReference type="Reactome" id="R-HSA-211976">
    <property type="pathway name" value="Endogenous sterols"/>
</dbReference>
<dbReference type="Reactome" id="R-HSA-5579009">
    <property type="pathway name" value="Defective CYP11B2 causes CMO-1 deficiency"/>
</dbReference>
<dbReference type="SignaLink" id="P19099"/>
<dbReference type="SIGNOR" id="P19099"/>
<dbReference type="BioGRID-ORCS" id="1585">
    <property type="hits" value="12 hits in 1146 CRISPR screens"/>
</dbReference>
<dbReference type="EvolutionaryTrace" id="P19099"/>
<dbReference type="GeneWiki" id="Aldosterone_synthase"/>
<dbReference type="GenomeRNAi" id="1585"/>
<dbReference type="Pharos" id="P19099">
    <property type="development level" value="Tchem"/>
</dbReference>
<dbReference type="PRO" id="PR:P19099"/>
<dbReference type="Proteomes" id="UP000005640">
    <property type="component" value="Chromosome 8"/>
</dbReference>
<dbReference type="RNAct" id="P19099">
    <property type="molecule type" value="protein"/>
</dbReference>
<dbReference type="Bgee" id="ENSG00000179142">
    <property type="expression patterns" value="Expressed in right adrenal gland cortex and 26 other cell types or tissues"/>
</dbReference>
<dbReference type="GO" id="GO:0005743">
    <property type="term" value="C:mitochondrial inner membrane"/>
    <property type="evidence" value="ECO:0000318"/>
    <property type="project" value="GO_Central"/>
</dbReference>
<dbReference type="GO" id="GO:0005739">
    <property type="term" value="C:mitochondrion"/>
    <property type="evidence" value="ECO:0000314"/>
    <property type="project" value="BHF-UCL"/>
</dbReference>
<dbReference type="GO" id="GO:0047783">
    <property type="term" value="F:corticosterone 18-monooxygenase activity"/>
    <property type="evidence" value="ECO:0000318"/>
    <property type="project" value="GO_Central"/>
</dbReference>
<dbReference type="GO" id="GO:0020037">
    <property type="term" value="F:heme binding"/>
    <property type="evidence" value="ECO:0000314"/>
    <property type="project" value="UniProtKB"/>
</dbReference>
<dbReference type="GO" id="GO:0005506">
    <property type="term" value="F:iron ion binding"/>
    <property type="evidence" value="ECO:0007669"/>
    <property type="project" value="InterPro"/>
</dbReference>
<dbReference type="GO" id="GO:0004507">
    <property type="term" value="F:steroid 11-beta-monooxygenase activity"/>
    <property type="evidence" value="ECO:0000314"/>
    <property type="project" value="UniProtKB"/>
</dbReference>
<dbReference type="GO" id="GO:0008395">
    <property type="term" value="F:steroid hydroxylase activity"/>
    <property type="evidence" value="ECO:0000304"/>
    <property type="project" value="Reactome"/>
</dbReference>
<dbReference type="GO" id="GO:0032342">
    <property type="term" value="P:aldosterone biosynthetic process"/>
    <property type="evidence" value="ECO:0000314"/>
    <property type="project" value="UniProtKB"/>
</dbReference>
<dbReference type="GO" id="GO:0006700">
    <property type="term" value="P:C21-steroid hormone biosynthetic process"/>
    <property type="evidence" value="ECO:0000314"/>
    <property type="project" value="BHF-UCL"/>
</dbReference>
<dbReference type="GO" id="GO:0032870">
    <property type="term" value="P:cellular response to hormone stimulus"/>
    <property type="evidence" value="ECO:0000270"/>
    <property type="project" value="UniProtKB"/>
</dbReference>
<dbReference type="GO" id="GO:0071375">
    <property type="term" value="P:cellular response to peptide hormone stimulus"/>
    <property type="evidence" value="ECO:0000318"/>
    <property type="project" value="GO_Central"/>
</dbReference>
<dbReference type="GO" id="GO:0035865">
    <property type="term" value="P:cellular response to potassium ion"/>
    <property type="evidence" value="ECO:0000270"/>
    <property type="project" value="UniProtKB"/>
</dbReference>
<dbReference type="GO" id="GO:0008203">
    <property type="term" value="P:cholesterol metabolic process"/>
    <property type="evidence" value="ECO:0000318"/>
    <property type="project" value="GO_Central"/>
</dbReference>
<dbReference type="GO" id="GO:0034651">
    <property type="term" value="P:cortisol biosynthetic process"/>
    <property type="evidence" value="ECO:0000315"/>
    <property type="project" value="UniProtKB"/>
</dbReference>
<dbReference type="GO" id="GO:0034650">
    <property type="term" value="P:cortisol metabolic process"/>
    <property type="evidence" value="ECO:0000318"/>
    <property type="project" value="GO_Central"/>
</dbReference>
<dbReference type="GO" id="GO:0006704">
    <property type="term" value="P:glucocorticoid biosynthetic process"/>
    <property type="evidence" value="ECO:0000318"/>
    <property type="project" value="GO_Central"/>
</dbReference>
<dbReference type="GO" id="GO:0006705">
    <property type="term" value="P:mineralocorticoid biosynthetic process"/>
    <property type="evidence" value="ECO:0000304"/>
    <property type="project" value="Reactome"/>
</dbReference>
<dbReference type="GO" id="GO:0055075">
    <property type="term" value="P:potassium ion homeostasis"/>
    <property type="evidence" value="ECO:0000315"/>
    <property type="project" value="BHF-UCL"/>
</dbReference>
<dbReference type="GO" id="GO:0002017">
    <property type="term" value="P:regulation of blood volume by renal aldosterone"/>
    <property type="evidence" value="ECO:0000315"/>
    <property type="project" value="BHF-UCL"/>
</dbReference>
<dbReference type="GO" id="GO:0003091">
    <property type="term" value="P:renal water homeostasis"/>
    <property type="evidence" value="ECO:0000305"/>
    <property type="project" value="BHF-UCL"/>
</dbReference>
<dbReference type="GO" id="GO:0055078">
    <property type="term" value="P:sodium ion homeostasis"/>
    <property type="evidence" value="ECO:0000315"/>
    <property type="project" value="BHF-UCL"/>
</dbReference>
<dbReference type="GO" id="GO:0016125">
    <property type="term" value="P:sterol metabolic process"/>
    <property type="evidence" value="ECO:0000304"/>
    <property type="project" value="Reactome"/>
</dbReference>
<dbReference type="CDD" id="cd20644">
    <property type="entry name" value="CYP11B"/>
    <property type="match status" value="1"/>
</dbReference>
<dbReference type="FunFam" id="1.10.630.10:FF:000015">
    <property type="entry name" value="Cholesterol side-chain cleavage enzyme, mitochondrial"/>
    <property type="match status" value="1"/>
</dbReference>
<dbReference type="Gene3D" id="1.10.630.10">
    <property type="entry name" value="Cytochrome P450"/>
    <property type="match status" value="1"/>
</dbReference>
<dbReference type="InterPro" id="IPR050479">
    <property type="entry name" value="CYP11_CYP27_families"/>
</dbReference>
<dbReference type="InterPro" id="IPR001128">
    <property type="entry name" value="Cyt_P450"/>
</dbReference>
<dbReference type="InterPro" id="IPR017972">
    <property type="entry name" value="Cyt_P450_CS"/>
</dbReference>
<dbReference type="InterPro" id="IPR002399">
    <property type="entry name" value="Cyt_P450_mitochondrial"/>
</dbReference>
<dbReference type="InterPro" id="IPR036396">
    <property type="entry name" value="Cyt_P450_sf"/>
</dbReference>
<dbReference type="PANTHER" id="PTHR24279">
    <property type="entry name" value="CYTOCHROME P450"/>
    <property type="match status" value="1"/>
</dbReference>
<dbReference type="PANTHER" id="PTHR24279:SF1">
    <property type="entry name" value="CYTOCHROME P450 11B2, MITOCHONDRIAL"/>
    <property type="match status" value="1"/>
</dbReference>
<dbReference type="Pfam" id="PF00067">
    <property type="entry name" value="p450"/>
    <property type="match status" value="1"/>
</dbReference>
<dbReference type="PRINTS" id="PR00408">
    <property type="entry name" value="MITP450"/>
</dbReference>
<dbReference type="PRINTS" id="PR00385">
    <property type="entry name" value="P450"/>
</dbReference>
<dbReference type="SUPFAM" id="SSF48264">
    <property type="entry name" value="Cytochrome P450"/>
    <property type="match status" value="1"/>
</dbReference>
<dbReference type="PROSITE" id="PS00086">
    <property type="entry name" value="CYTOCHROME_P450"/>
    <property type="match status" value="1"/>
</dbReference>
<comment type="function">
    <text evidence="6 7 10 11 12 13 16 17 22 23 36">A cytochrome P450 monooxygenase that catalyzes the biosynthesis of aldosterone, the main mineralocorticoid in the human body responsible for salt and water homeostasis, thus involved in blood pressure regulation, arterial hypertension, and the development of heart failure (PubMed:11856349, PubMed:12530636, PubMed:1518866, PubMed:15356073, PubMed:1594605, PubMed:1775135, PubMed:22446688, PubMed:23322723, PubMed:9814482, PubMed:9814506). Catalyzes three sequential oxidative reactions of 11-deoxycorticosterone (21-hydroxyprogesterone), namely 11-beta hydroxylation, followed by two successive oxidations at C18 yielding 18-hydroxy and then 18-oxo intermediates (that would not leave the enzyme active site during the consecutive hydroxylation reactions), ending with the formation of aldosterone (PubMed:11856349, PubMed:12530636, PubMed:1518866, PubMed:1594605, PubMed:1775135, PubMed:22446688, PubMed:23322723, PubMed:9814506). Can also produce 18-hydroxycortisol and 18-oxocortisol, derived from successive oxidations of cortisol at C18, normally found at very low levels, but significantly increased in primary aldosteronism, the most common form of secondary hypertension (PubMed:15356073, PubMed:9814482). Mechanistically, uses molecular oxygen inserting one oxygen atom into a substrate and reducing the second into a water molecule. Two electrons are provided by NADPH via a two-protein mitochondrial transfer system comprising flavoprotein FDXR (adrenodoxin/ferredoxin reductase) and nonheme iron-sulfur protein FDX1 or FDX2 (adrenodoxin/ferredoxin) (PubMed:11856349, PubMed:1594605, PubMed:23322723, PubMed:9814506). Could also be involved in the androgen metabolic pathway (Probable).</text>
</comment>
<comment type="catalytic activity">
    <reaction evidence="6 7 10 13 16 17">
        <text>a steroid + 2 reduced [adrenodoxin] + O2 + 2 H(+) = an 11beta-hydroxysteroid + 2 oxidized [adrenodoxin] + H2O</text>
        <dbReference type="Rhea" id="RHEA:15629"/>
        <dbReference type="Rhea" id="RHEA-COMP:9998"/>
        <dbReference type="Rhea" id="RHEA-COMP:9999"/>
        <dbReference type="ChEBI" id="CHEBI:15377"/>
        <dbReference type="ChEBI" id="CHEBI:15378"/>
        <dbReference type="ChEBI" id="CHEBI:15379"/>
        <dbReference type="ChEBI" id="CHEBI:33737"/>
        <dbReference type="ChEBI" id="CHEBI:33738"/>
        <dbReference type="ChEBI" id="CHEBI:35341"/>
        <dbReference type="ChEBI" id="CHEBI:35346"/>
        <dbReference type="EC" id="1.14.15.4"/>
    </reaction>
    <physiologicalReaction direction="left-to-right" evidence="10 13 30 31 35 36">
        <dbReference type="Rhea" id="RHEA:15630"/>
    </physiologicalReaction>
</comment>
<comment type="catalytic activity">
    <reaction evidence="6 7 10 12 13 16 17 23">
        <text>21-hydroxyprogesterone + 2 reduced [adrenodoxin] + O2 + 2 H(+) = corticosterone + 2 oxidized [adrenodoxin] + H2O</text>
        <dbReference type="Rhea" id="RHEA:46104"/>
        <dbReference type="Rhea" id="RHEA-COMP:9998"/>
        <dbReference type="Rhea" id="RHEA-COMP:9999"/>
        <dbReference type="ChEBI" id="CHEBI:15377"/>
        <dbReference type="ChEBI" id="CHEBI:15378"/>
        <dbReference type="ChEBI" id="CHEBI:15379"/>
        <dbReference type="ChEBI" id="CHEBI:16827"/>
        <dbReference type="ChEBI" id="CHEBI:16973"/>
        <dbReference type="ChEBI" id="CHEBI:33737"/>
        <dbReference type="ChEBI" id="CHEBI:33738"/>
    </reaction>
    <physiologicalReaction direction="left-to-right" evidence="10 13 30 31 35 36">
        <dbReference type="Rhea" id="RHEA:46105"/>
    </physiologicalReaction>
</comment>
<comment type="catalytic activity">
    <reaction evidence="6 11 12 16 17 23 31 32 34">
        <text>corticosterone + 2 reduced [adrenodoxin] + O2 + 2 H(+) = 18-hydroxycorticosterone + 2 oxidized [adrenodoxin] + H2O</text>
        <dbReference type="Rhea" id="RHEA:11872"/>
        <dbReference type="Rhea" id="RHEA-COMP:9998"/>
        <dbReference type="Rhea" id="RHEA-COMP:9999"/>
        <dbReference type="ChEBI" id="CHEBI:15377"/>
        <dbReference type="ChEBI" id="CHEBI:15378"/>
        <dbReference type="ChEBI" id="CHEBI:15379"/>
        <dbReference type="ChEBI" id="CHEBI:16485"/>
        <dbReference type="ChEBI" id="CHEBI:16827"/>
        <dbReference type="ChEBI" id="CHEBI:33737"/>
        <dbReference type="ChEBI" id="CHEBI:33738"/>
        <dbReference type="EC" id="1.14.15.5"/>
    </reaction>
    <physiologicalReaction direction="left-to-right" evidence="30 31 32 33 34 35 36">
        <dbReference type="Rhea" id="RHEA:11873"/>
    </physiologicalReaction>
</comment>
<comment type="catalytic activity">
    <reaction evidence="6 11 12 23 35">
        <text>18-hydroxycorticosterone + 2 reduced [adrenodoxin] + O2 + 2 H(+) = aldosterone + 2 oxidized [adrenodoxin] + 2 H2O</text>
        <dbReference type="Rhea" id="RHEA:50792"/>
        <dbReference type="Rhea" id="RHEA-COMP:9998"/>
        <dbReference type="Rhea" id="RHEA-COMP:9999"/>
        <dbReference type="ChEBI" id="CHEBI:15377"/>
        <dbReference type="ChEBI" id="CHEBI:15378"/>
        <dbReference type="ChEBI" id="CHEBI:15379"/>
        <dbReference type="ChEBI" id="CHEBI:16485"/>
        <dbReference type="ChEBI" id="CHEBI:27584"/>
        <dbReference type="ChEBI" id="CHEBI:33737"/>
        <dbReference type="ChEBI" id="CHEBI:33738"/>
    </reaction>
    <physiologicalReaction direction="left-to-right" evidence="30 31 32 33 34 35">
        <dbReference type="Rhea" id="RHEA:50793"/>
    </physiologicalReaction>
</comment>
<comment type="catalytic activity">
    <reaction evidence="6 7 13 17">
        <text>11-deoxycortisol + 2 reduced [adrenodoxin] + O2 + 2 H(+) = cortisol + 2 oxidized [adrenodoxin] + H2O</text>
        <dbReference type="Rhea" id="RHEA:46100"/>
        <dbReference type="Rhea" id="RHEA-COMP:9998"/>
        <dbReference type="Rhea" id="RHEA-COMP:9999"/>
        <dbReference type="ChEBI" id="CHEBI:15377"/>
        <dbReference type="ChEBI" id="CHEBI:15378"/>
        <dbReference type="ChEBI" id="CHEBI:15379"/>
        <dbReference type="ChEBI" id="CHEBI:17650"/>
        <dbReference type="ChEBI" id="CHEBI:28324"/>
        <dbReference type="ChEBI" id="CHEBI:33737"/>
        <dbReference type="ChEBI" id="CHEBI:33738"/>
    </reaction>
    <physiologicalReaction direction="left-to-right" evidence="13 31 36">
        <dbReference type="Rhea" id="RHEA:46101"/>
    </physiologicalReaction>
</comment>
<comment type="catalytic activity">
    <reaction evidence="2">
        <text>21-hydroxyprogesterone + 2 reduced [adrenodoxin] + O2 + 2 H(+) = 18-hydroxy-11-deoxycorticosterone + 2 oxidized [adrenodoxin] + H2O</text>
        <dbReference type="Rhea" id="RHEA:76151"/>
        <dbReference type="Rhea" id="RHEA-COMP:9998"/>
        <dbReference type="Rhea" id="RHEA-COMP:9999"/>
        <dbReference type="ChEBI" id="CHEBI:15377"/>
        <dbReference type="ChEBI" id="CHEBI:15378"/>
        <dbReference type="ChEBI" id="CHEBI:15379"/>
        <dbReference type="ChEBI" id="CHEBI:16973"/>
        <dbReference type="ChEBI" id="CHEBI:33737"/>
        <dbReference type="ChEBI" id="CHEBI:33738"/>
        <dbReference type="ChEBI" id="CHEBI:195166"/>
    </reaction>
    <physiologicalReaction direction="left-to-right" evidence="2">
        <dbReference type="Rhea" id="RHEA:76152"/>
    </physiologicalReaction>
</comment>
<comment type="catalytic activity">
    <reaction evidence="11 22">
        <text>cortisol + 2 reduced [adrenodoxin] + O2 + 2 H(+) = 18-hydroxycortisol + 2 oxidized [adrenodoxin] + H2O</text>
        <dbReference type="Rhea" id="RHEA:76019"/>
        <dbReference type="Rhea" id="RHEA-COMP:9998"/>
        <dbReference type="Rhea" id="RHEA-COMP:9999"/>
        <dbReference type="ChEBI" id="CHEBI:15377"/>
        <dbReference type="ChEBI" id="CHEBI:15378"/>
        <dbReference type="ChEBI" id="CHEBI:15379"/>
        <dbReference type="ChEBI" id="CHEBI:17650"/>
        <dbReference type="ChEBI" id="CHEBI:33737"/>
        <dbReference type="ChEBI" id="CHEBI:33738"/>
        <dbReference type="ChEBI" id="CHEBI:89455"/>
    </reaction>
    <physiologicalReaction direction="left-to-right" evidence="33 37">
        <dbReference type="Rhea" id="RHEA:76020"/>
    </physiologicalReaction>
</comment>
<comment type="catalytic activity">
    <reaction evidence="33 37">
        <text>18-hydroxycortisol + 2 reduced [adrenodoxin] + O2 + 2 H(+) = 18-oxocortisol + 2 oxidized [adrenodoxin] + 2 H2O</text>
        <dbReference type="Rhea" id="RHEA:76023"/>
        <dbReference type="Rhea" id="RHEA-COMP:9998"/>
        <dbReference type="Rhea" id="RHEA-COMP:9999"/>
        <dbReference type="ChEBI" id="CHEBI:15377"/>
        <dbReference type="ChEBI" id="CHEBI:15378"/>
        <dbReference type="ChEBI" id="CHEBI:15379"/>
        <dbReference type="ChEBI" id="CHEBI:33737"/>
        <dbReference type="ChEBI" id="CHEBI:33738"/>
        <dbReference type="ChEBI" id="CHEBI:89213"/>
        <dbReference type="ChEBI" id="CHEBI:89455"/>
    </reaction>
    <physiologicalReaction direction="left-to-right" evidence="33 37">
        <dbReference type="Rhea" id="RHEA:76024"/>
    </physiologicalReaction>
</comment>
<comment type="cofactor">
    <cofactor evidence="17">
        <name>heme</name>
        <dbReference type="ChEBI" id="CHEBI:30413"/>
    </cofactor>
</comment>
<comment type="biophysicochemical properties">
    <kinetics>
        <KM evidence="11">2.6 uM for cortisol</KM>
        <KM evidence="16">106 uM for 11-deoxycorticosterone</KM>
        <Vmax evidence="16">238.0 nmol/min/nmol enzyme with 11-deoxycorticosterone</Vmax>
    </kinetics>
</comment>
<comment type="pathway">
    <text evidence="6 12 17 23">Steroid biosynthesis.</text>
</comment>
<comment type="subcellular location">
    <subcellularLocation>
        <location evidence="1">Mitochondrion inner membrane</location>
        <topology evidence="1">Peripheral membrane protein</topology>
    </subcellularLocation>
</comment>
<comment type="tissue specificity">
    <text evidence="14">Expressed sporadically in the zona glomerulosa (zG) of the adrenal cortex (conventional zonation), as well as in aldosterone-producing cell clusters (APCCs) composed of morphological zG cells in contact with the capsule (variegated zonation).</text>
</comment>
<comment type="induction">
    <text evidence="19">Expression is induced by angiotensin II, potassium (K+), and also by cAMP.</text>
</comment>
<comment type="disease" evidence="5 18 20">
    <disease id="DI-01434">
        <name>Corticosterone methyloxidase 1 deficiency</name>
        <acronym>CMO-1 deficiency</acronym>
        <description>Autosomal recessive disorder of aldosterone biosynthesis. There are two biochemically different forms of selective aldosterone deficiency be termed corticosterone methyloxidase (CMO) deficiency type 1 and type 2. In CMO-1 deficiency, aldosterone is undetectable in plasma, while its immediate precursor, 18-hydroxycorticosterone, is low or normal.</description>
        <dbReference type="MIM" id="203400"/>
    </disease>
    <text>The disease is caused by variants affecting the gene represented in this entry.</text>
</comment>
<comment type="disease" evidence="8 9 12 21 23">
    <disease id="DI-01435">
        <name>Corticosterone methyloxidase 2 deficiency</name>
        <acronym>CMO-2 deficiency</acronym>
        <description>Autosomal recessive disorder of aldosterone biosynthesis. In CMO-2 deficiency, aldosterone can be low or normal, but at the expense of increased secretion of 18-hydroxycorticosterone. Consequently, patients have a greatly increased ratio of 18-hydroxycorticosterone to aldosterone and a low ratio of corticosterone to 18-hydroxycorticosterone in serum.</description>
        <dbReference type="MIM" id="610600"/>
    </disease>
    <text>The disease is caused by variants affecting the gene represented in this entry.</text>
</comment>
<comment type="miscellaneous">
    <text evidence="15">Expressed in aldosterone-secreting tumors and in adrenal glands of patients with idiopathic hyperaldosteronism.</text>
</comment>
<comment type="similarity">
    <text evidence="29">Belongs to the cytochrome P450 family.</text>
</comment>
<comment type="online information" name="Wikipedia">
    <link uri="https://en.wikipedia.org/wiki/CYP11B2"/>
    <text>CYP11B2 entry</text>
</comment>
<name>C11B2_HUMAN</name>
<organism>
    <name type="scientific">Homo sapiens</name>
    <name type="common">Human</name>
    <dbReference type="NCBI Taxonomy" id="9606"/>
    <lineage>
        <taxon>Eukaryota</taxon>
        <taxon>Metazoa</taxon>
        <taxon>Chordata</taxon>
        <taxon>Craniata</taxon>
        <taxon>Vertebrata</taxon>
        <taxon>Euteleostomi</taxon>
        <taxon>Mammalia</taxon>
        <taxon>Eutheria</taxon>
        <taxon>Euarchontoglires</taxon>
        <taxon>Primates</taxon>
        <taxon>Haplorrhini</taxon>
        <taxon>Catarrhini</taxon>
        <taxon>Hominidae</taxon>
        <taxon>Homo</taxon>
    </lineage>
</organism>
<protein>
    <recommendedName>
        <fullName>Cytochrome P450 11B2, mitochondrial</fullName>
    </recommendedName>
    <alternativeName>
        <fullName evidence="28">Aldosterone synthase</fullName>
        <shortName>ALDOS</shortName>
    </alternativeName>
    <alternativeName>
        <fullName>Aldosterone-synthesizing enzyme</fullName>
    </alternativeName>
    <alternativeName>
        <fullName>CYPXIB2</fullName>
    </alternativeName>
    <alternativeName>
        <fullName>Corticosterone 18-monooxygenase, CYP11B2</fullName>
        <ecNumber evidence="6 11 12 17 23">1.14.15.5</ecNumber>
    </alternativeName>
    <alternativeName>
        <fullName>Cytochrome P-450Aldo</fullName>
    </alternativeName>
    <alternativeName>
        <fullName>Cytochrome P-450C18</fullName>
    </alternativeName>
    <alternativeName>
        <fullName evidence="26">Steroid 11-beta-hydroxylase, CYP11B2</fullName>
        <ecNumber evidence="6 7 10 13 17">1.14.15.4</ecNumber>
    </alternativeName>
    <alternativeName>
        <fullName evidence="27">Steroid 18-hydroxylase</fullName>
    </alternativeName>
</protein>
<sequence length="503" mass="57560">MALRAKAEVCVAAPWLSLQRARALGTRAARAPRTVLPFEAMPQHPGNRWLRLLQIWREQGYEHLHLEMHQTFQELGPIFRYNLGGPRMVCVMLPEDVEKLQQVDSLHPCRMILEPWVAYRQHRGHKCGVFLLNGPEWRFNRLRLNPDVLSPKAVQRFLPMVDAVARDFSQALKKKVLQNARGSLTLDVQPSIFHYTIEASNLALFGERLGLVGHSPSSASLNFLHALEVMFKSTVQLMFMPRSLSRWISPKVWKEHFEAWDCIFQYGDNCIQKIYQELAFNRPQHYTGIVAELLLKAELSLEAIKANSMELTAGSVDTTAFPLLMTLFELARNPDVQQILRQESLAAAASISEHPQKATTELPLLRAALKETLRLYPVGLFLERVVSSDLVLQNYHIPAGTLVQVFLYSLGRNAALFPRPERYNPQRWLDIRGSGRNFHHVPFGFGMRQCLGRRLAEAEMLLLLHHVLKHFLVETLTQEDIKMVYSFILRPGTSPLLTFRAIN</sequence>
<reference key="1">
    <citation type="journal article" date="1989" name="J. Biol. Chem.">
        <title>Characterization of two genes encoding human steroid 11 beta-hydroxylase (P-450(11) beta).</title>
        <authorList>
            <person name="Mornet E."/>
            <person name="Dupont J."/>
            <person name="Vitek A."/>
            <person name="White P.C."/>
        </authorList>
    </citation>
    <scope>NUCLEOTIDE SEQUENCE [GENOMIC DNA]</scope>
</reference>
<reference key="2">
    <citation type="journal article" date="1990" name="Biochem. Biophys. Res. Commun.">
        <title>Cloning and expression of a cDNA for human cytochrome P-450aldo as related to primary aldosteronism.</title>
        <authorList>
            <person name="Kawamoto T."/>
            <person name="Mitsuuchi Y."/>
            <person name="Ohnishi T."/>
            <person name="Ichikawa Y."/>
            <person name="Yokoyama Y."/>
            <person name="Sumimoto H."/>
            <person name="Toda K."/>
            <person name="Miyahara K."/>
            <person name="Kuribayashi I."/>
            <person name="Nakao K."/>
            <person name="Hosoda K."/>
            <person name="Yamamoto Y."/>
            <person name="Imura H."/>
            <person name="Shizuta Y."/>
        </authorList>
    </citation>
    <scope>NUCLEOTIDE SEQUENCE [MRNA]</scope>
    <source>
        <tissue>Adrenal gland</tissue>
    </source>
</reference>
<reference key="3">
    <citation type="submission" date="1994-06" db="EMBL/GenBank/DDBJ databases">
        <authorList>
            <person name="Kawamoto T."/>
            <person name="Miyahara K."/>
            <person name="Mitsuuchi Y."/>
            <person name="Ulick S."/>
            <person name="Shizuta Y."/>
        </authorList>
    </citation>
    <scope>NUCLEOTIDE SEQUENCE [GENOMIC DNA]</scope>
    <source>
        <tissue>Blood</tissue>
    </source>
</reference>
<reference key="4">
    <citation type="submission" date="2007-12" db="EMBL/GenBank/DDBJ databases">
        <authorList>
            <consortium name="NHLBI resequencing and genotyping service (RS&amp;G)"/>
        </authorList>
    </citation>
    <scope>NUCLEOTIDE SEQUENCE [GENOMIC DNA]</scope>
</reference>
<reference key="5">
    <citation type="submission" date="2005-09" db="EMBL/GenBank/DDBJ databases">
        <authorList>
            <person name="Mural R.J."/>
            <person name="Istrail S."/>
            <person name="Sutton G.G."/>
            <person name="Florea L."/>
            <person name="Halpern A.L."/>
            <person name="Mobarry C.M."/>
            <person name="Lippert R."/>
            <person name="Walenz B."/>
            <person name="Shatkay H."/>
            <person name="Dew I."/>
            <person name="Miller J.R."/>
            <person name="Flanigan M.J."/>
            <person name="Edwards N.J."/>
            <person name="Bolanos R."/>
            <person name="Fasulo D."/>
            <person name="Halldorsson B.V."/>
            <person name="Hannenhalli S."/>
            <person name="Turner R."/>
            <person name="Yooseph S."/>
            <person name="Lu F."/>
            <person name="Nusskern D.R."/>
            <person name="Shue B.C."/>
            <person name="Zheng X.H."/>
            <person name="Zhong F."/>
            <person name="Delcher A.L."/>
            <person name="Huson D.H."/>
            <person name="Kravitz S.A."/>
            <person name="Mouchard L."/>
            <person name="Reinert K."/>
            <person name="Remington K.A."/>
            <person name="Clark A.G."/>
            <person name="Waterman M.S."/>
            <person name="Eichler E.E."/>
            <person name="Adams M.D."/>
            <person name="Hunkapiller M.W."/>
            <person name="Myers E.W."/>
            <person name="Venter J.C."/>
        </authorList>
    </citation>
    <scope>NUCLEOTIDE SEQUENCE [LARGE SCALE GENOMIC DNA]</scope>
</reference>
<reference key="6">
    <citation type="journal article" date="1991" name="J. Biol. Chem.">
        <title>Aldosterone synthase cytochrome P-450 expressed in the adrenals of patients with primary aldosteronism.</title>
        <authorList>
            <person name="Ogishima T."/>
            <person name="Shibata H."/>
            <person name="Shimada H."/>
            <person name="Mitani F."/>
            <person name="Suzuki H."/>
            <person name="Saruta T."/>
            <person name="Ishimura Y."/>
        </authorList>
    </citation>
    <scope>MISCELLANEOUS</scope>
</reference>
<reference key="7">
    <citation type="journal article" date="1991" name="Mol. Endocrinol.">
        <title>The product of the CYP11B2 gene is required for aldosterone biosynthesis in the human adrenal cortex.</title>
        <authorList>
            <person name="Curnow K.M."/>
            <person name="Tusie-Luna M.T."/>
            <person name="Pascoe L."/>
            <person name="Natarajan R."/>
            <person name="Gu J.L."/>
            <person name="Nadler J.L."/>
            <person name="White P.C."/>
        </authorList>
    </citation>
    <scope>FUNCTION</scope>
    <scope>CATALYTIC ACTIVITY</scope>
</reference>
<reference key="8">
    <citation type="journal article" date="1992" name="Proc. Natl. Acad. Sci. U.S.A.">
        <title>Glucocorticoid-suppressible hyperaldosteronism results from hybrid genes created by unequal crossovers between CYP11B1 and CYP11B2.</title>
        <authorList>
            <person name="Pascoe L."/>
            <person name="Curnow K.M."/>
            <person name="Slutsker L."/>
            <person name="Connell J.M."/>
            <person name="Speiser P.W."/>
            <person name="New M.I."/>
            <person name="White P.C."/>
        </authorList>
    </citation>
    <scope>FUNCTION</scope>
    <scope>CATALYTIC ACTIVITY</scope>
</reference>
<reference key="9">
    <citation type="journal article" date="1997" name="Mol. Endocrinol.">
        <title>Angiotensin II and potassium regulate human CYP11B2 transcription through common cis-elements.</title>
        <authorList>
            <person name="Clyne C.D."/>
            <person name="Zhang Y."/>
            <person name="Slutsker L."/>
            <person name="Mathis J.M."/>
            <person name="White P.C."/>
            <person name="Rainey W.E."/>
        </authorList>
    </citation>
    <scope>INDUCTION</scope>
</reference>
<reference key="10">
    <citation type="journal article" date="1998" name="J. Clin. Endocrinol. Metab.">
        <title>Recombinant CYP11B genes encode enzymes that can catalyze conversion of 11-deoxycortisol to cortisol, 18-hydroxycortisol, and 18-oxocortisol.</title>
        <authorList>
            <person name="Mulatero P."/>
            <person name="Curnow K.M."/>
            <person name="Aupetit-Faisant B."/>
            <person name="Foekling M."/>
            <person name="Gomez-Sanchez C."/>
            <person name="Veglio F."/>
            <person name="Jeunemaitre X."/>
            <person name="Corvol P."/>
            <person name="Pascoe L."/>
        </authorList>
    </citation>
    <scope>FUNCTION</scope>
    <scope>CATALYTIC ACTIVITY</scope>
</reference>
<reference key="11">
    <citation type="journal article" date="2002" name="Endocr. Res.">
        <title>Modulation of steroid hydroxylase activity in stably transfected V79MZh11B1 and V79MZh11B2 cells by PKC and PKD inhibitors.</title>
        <authorList>
            <person name="Bureik M."/>
            <person name="Zeeh A."/>
            <person name="Bernhardt R."/>
        </authorList>
    </citation>
    <scope>FUNCTION</scope>
    <scope>CATALYTIC ACTIVITY</scope>
</reference>
<reference key="12">
    <citation type="journal article" date="2002" name="Eur. J. Biochem.">
        <title>The effect of amino-acid substitutions I112P, D147E and K152N in CYP11B2 on the catalytic activities of the enzyme.</title>
        <authorList>
            <person name="Bechtel S."/>
            <person name="Belkina N."/>
            <person name="Bernhardt R."/>
        </authorList>
    </citation>
    <scope>FUNCTION</scope>
    <scope>CATALYTIC ACTIVITY</scope>
    <scope>PATHWAY</scope>
    <scope>MUTAGENESIS OF ILE-112; ASP-147 AND LYS-152</scope>
</reference>
<reference key="13">
    <citation type="journal article" date="2004" name="J. Clin. Endocrinol. Metab.">
        <title>Studies on the origin of circulating 18-hydroxycortisol and 18-oxocortisol in normal human subjects.</title>
        <authorList>
            <person name="Freel E.M."/>
            <person name="Shakerdi L.A."/>
            <person name="Friel E.C."/>
            <person name="Wallace A.M."/>
            <person name="Davies E."/>
            <person name="Fraser R."/>
            <person name="Connell J.M."/>
        </authorList>
    </citation>
    <scope>FUNCTION</scope>
    <scope>CATALYTIC ACTIVITY</scope>
    <scope>BIOPHYSICOCHEMICAL PROPERTIES</scope>
</reference>
<reference key="14">
    <citation type="journal article" date="2010" name="J. Clin. Endocrinol. Metab.">
        <title>Adrenocortical zonation in humans under normal and pathological conditions.</title>
        <authorList>
            <person name="Nishimoto K."/>
            <person name="Nakagawa K."/>
            <person name="Li D."/>
            <person name="Kosaka T."/>
            <person name="Oya M."/>
            <person name="Mikami S."/>
            <person name="Shibata H."/>
            <person name="Itoh H."/>
            <person name="Mitani F."/>
            <person name="Yamazaki T."/>
            <person name="Ogishima T."/>
            <person name="Suematsu M."/>
            <person name="Mukai K."/>
        </authorList>
    </citation>
    <scope>TISSUE SPECIFICITY</scope>
</reference>
<reference key="15">
    <citation type="journal article" date="2012" name="J. Steroid Biochem. Mol. Biol.">
        <title>Human aldosterone synthase: recombinant expression in E. coli and purification enables a detailed biochemical analysis of the protein on the molecular level.</title>
        <authorList>
            <person name="Hobler A."/>
            <person name="Kagawa N."/>
            <person name="Hutter M.C."/>
            <person name="Hartmann M.F."/>
            <person name="Wudy S.A."/>
            <person name="Hannemann F."/>
            <person name="Bernhardt R."/>
        </authorList>
    </citation>
    <scope>FUNCTION</scope>
    <scope>CATALYTIC ACTIVITY</scope>
    <scope>BIOPHYSICOCHEMICAL PROPERTIES</scope>
</reference>
<reference key="16">
    <citation type="journal article" date="2013" name="Mol. Endocrinol.">
        <title>Structural insights into aldosterone synthase substrate specificity and targeted inhibition.</title>
        <authorList>
            <person name="Strushkevich N."/>
            <person name="Gilep A.A."/>
            <person name="Shen L."/>
            <person name="Arrowsmith C.H."/>
            <person name="Edwards A.M."/>
            <person name="Usanov S.A."/>
            <person name="Park H.W."/>
        </authorList>
    </citation>
    <scope>X-RAY CRYSTALLOGRAPHY (2.49 ANGSTROMS) OF 34-503 IN COMPLEXES WITH HEME; DESOXYCORTICOSTERONE AND SYNTHETIC INHIBITOR FADROZOLE</scope>
    <scope>CATALYTIC ACTIVITY</scope>
    <scope>COFACTOR</scope>
    <scope>FUNCTION</scope>
    <scope>PATHWAY</scope>
</reference>
<reference key="17">
    <citation type="journal article" date="1992" name="Proc. Natl. Acad. Sci. U.S.A.">
        <title>Mutations in the human CYP11B2 (aldosterone synthase) gene causing corticosterone methyloxidase II deficiency.</title>
        <authorList>
            <person name="Pascoe L."/>
            <person name="Curnow K.M."/>
            <person name="Slutsker L."/>
            <person name="Roesler A."/>
            <person name="White P.C."/>
        </authorList>
    </citation>
    <scope>VARIANTS CMO-2 DEFICIENCY TRP-181 AND ALA-386</scope>
    <scope>CATALYTIC ACTIVITY</scope>
    <scope>FUNCTION</scope>
    <scope>PATHWAY</scope>
</reference>
<reference key="18">
    <citation type="journal article" date="1992" name="Biochem. Biophys. Res. Commun.">
        <title>Congenitally defective aldosterone biosynthesis in humans: the involvement of point mutations of the P-450C18 gene (CYP11B2) in CMO II deficient patients.</title>
        <authorList>
            <person name="Mitsuuchi Y."/>
            <person name="Kawamoto T."/>
            <person name="Naiki Y."/>
            <person name="Miyahara K."/>
            <person name="Toda K."/>
            <person name="Kuribayashi I."/>
            <person name="Orii T."/>
            <person name="Yasuda K."/>
            <person name="Miura K."/>
            <person name="Nakao K."/>
            <person name="Imura H."/>
            <person name="Ulick S."/>
            <person name="Shizuta Y."/>
        </authorList>
    </citation>
    <scope>VARIANTS CMO-2 DEFICIENCY TRP-181 AND ALA-386</scope>
</reference>
<reference key="19">
    <citation type="journal article" date="1992" name="Biochem. Biophys. Res. Commun.">
        <authorList>
            <person name="Mitsuuchi Y."/>
            <person name="Kawamoto T."/>
            <person name="Naiki Y."/>
            <person name="Miyahara K."/>
            <person name="Toda K."/>
            <person name="Kuribayashi I."/>
            <person name="Orii T."/>
            <person name="Yasuda K."/>
            <person name="Miura K."/>
            <person name="Nakao K."/>
            <person name="Imura H."/>
            <person name="Ulick S."/>
            <person name="Shizuta Y."/>
        </authorList>
    </citation>
    <scope>ERRATUM OF PUBMED:1346492</scope>
</reference>
<reference key="20">
    <citation type="journal article" date="1993" name="Biochem. Biophys. Res. Commun.">
        <title>Congenitally defective aldosterone biosynthesis in humans: inactivation of the P-450(C18) gene (CYP11B2) due to nucleotide deletion in CMO I deficient patients.</title>
        <authorList>
            <person name="Mitsuuchi Y."/>
            <person name="Kawamoto T."/>
            <person name="Miyahara K."/>
            <person name="Ulick S."/>
            <person name="Morton D.H."/>
            <person name="Naiki Y."/>
            <person name="Kuribayashi I."/>
            <person name="Toda K."/>
            <person name="Hara T."/>
            <person name="Orii T."/>
            <person name="Yasuda K."/>
            <person name="Miura K."/>
            <person name="Yamamoto Y."/>
            <person name="Imura H."/>
            <person name="Shizuta Y."/>
        </authorList>
    </citation>
    <scope>INVOLVEMENT IN CMO-1 DEFICIENCY</scope>
</reference>
<reference key="21">
    <citation type="journal article" date="1997" name="Biochem. Biophys. Res. Commun.">
        <title>CMO I deficiency caused by a point mutation in exon 8 of the human CYP11B2 gene encoding steroid 18-hydroxylase (P450C18).</title>
        <authorList>
            <person name="Nomoto S."/>
            <person name="Massa G."/>
            <person name="Mitani F."/>
            <person name="Ishimura Y."/>
            <person name="Miyahara K."/>
            <person name="Toda K."/>
            <person name="Nagano I."/>
            <person name="Yamashiro T."/>
            <person name="Ogoshi S."/>
            <person name="Fukata J."/>
            <person name="Onishi S."/>
            <person name="Hashimoto K."/>
            <person name="Doi Y."/>
            <person name="Imura H."/>
            <person name="Shizuta Y."/>
        </authorList>
    </citation>
    <scope>VARIANT CMO-1 DEFICIENCY PRO-461</scope>
</reference>
<reference key="22">
    <citation type="journal article" date="1998" name="Eur. J. Pediatr.">
        <title>Mutation THR-185 ILE is associated with corticosterone methyl oxidase deficiency type II.</title>
        <authorList>
            <person name="Peter M."/>
            <person name="Buenger K."/>
            <person name="Solyom J."/>
            <person name="Sippell W.G."/>
        </authorList>
    </citation>
    <scope>VARIANT CMO-2 DEFICIENCY ILE-185</scope>
</reference>
<reference key="23">
    <citation type="journal article" date="1998" name="J. Clin. Endocrinol. Metab.">
        <title>Isolated aldosterone synthase deficiency caused by simultaneous E198D and V386A mutations in the CYP11B2 gene.</title>
        <authorList>
            <person name="Portrat-Doyen S."/>
            <person name="Tourniaire J."/>
            <person name="Richard O."/>
            <person name="Mulatero P."/>
            <person name="Aupetit-Faisant B."/>
            <person name="Curnow K.M."/>
            <person name="Pascoe L."/>
            <person name="Morel Y."/>
        </authorList>
    </citation>
    <scope>VARIANTS CMO-2 DEFICIENCY ASP-198 AND ALA-386</scope>
    <scope>FUNCTION</scope>
    <scope>CATALYTIC ACTIVITY</scope>
    <scope>PATHWAY</scope>
</reference>
<reference key="24">
    <citation type="journal article" date="1999" name="Hypertension">
        <title>Genetic polymorphism of CYP11B2 gene and hypertension in Japanese.</title>
        <authorList>
            <person name="Tamaki S."/>
            <person name="Iwai N."/>
            <person name="Tsujita Y."/>
            <person name="Kinoshita M."/>
        </authorList>
    </citation>
    <scope>VARIANT ARG-173</scope>
</reference>
<reference key="25">
    <citation type="journal article" date="1999" name="Nat. Genet.">
        <title>Characterization of single-nucleotide polymorphisms in coding regions of human genes.</title>
        <authorList>
            <person name="Cargill M."/>
            <person name="Altshuler D."/>
            <person name="Ireland J."/>
            <person name="Sklar P."/>
            <person name="Ardlie K."/>
            <person name="Patil N."/>
            <person name="Shaw N."/>
            <person name="Lane C.R."/>
            <person name="Lim E.P."/>
            <person name="Kalyanaraman N."/>
            <person name="Nemesh J."/>
            <person name="Ziaugra L."/>
            <person name="Friedland L."/>
            <person name="Rolfe A."/>
            <person name="Warrington J."/>
            <person name="Lipshutz R."/>
            <person name="Daley G.Q."/>
            <person name="Lander E.S."/>
        </authorList>
    </citation>
    <scope>VARIANTS THR-29; GLN-30; ARG-173; THR-248; SER-281; THR-339; ALA-386 AND SER-435</scope>
</reference>
<reference key="26">
    <citation type="journal article" date="1999" name="Nat. Genet.">
        <authorList>
            <person name="Cargill M."/>
            <person name="Altshuler D."/>
            <person name="Ireland J."/>
            <person name="Sklar P."/>
            <person name="Ardlie K."/>
            <person name="Patil N."/>
            <person name="Shaw N."/>
            <person name="Lane C.R."/>
            <person name="Lim E.P."/>
            <person name="Kalyanaraman N."/>
            <person name="Nemesh J."/>
            <person name="Ziaugra L."/>
            <person name="Friedland L."/>
            <person name="Rolfe A."/>
            <person name="Warrington J."/>
            <person name="Lipshutz R."/>
            <person name="Daley G.Q."/>
            <person name="Lander E.S."/>
        </authorList>
    </citation>
    <scope>ERRATUM OF PUBMED:10391209</scope>
</reference>
<reference key="27">
    <citation type="journal article" date="1999" name="Nat. Genet.">
        <title>Patterns of single-nucleotide polymorphisms in candidate genes for blood-pressure homeostasis.</title>
        <authorList>
            <person name="Halushka M.K."/>
            <person name="Fan J.-B."/>
            <person name="Bentley K."/>
            <person name="Hsie L."/>
            <person name="Shen N."/>
            <person name="Weder A."/>
            <person name="Cooper R."/>
            <person name="Lipshutz R."/>
            <person name="Chakravarti A."/>
        </authorList>
    </citation>
    <scope>VARIANTS ARG-173; THR-248; SER-281; THR-339; ALA-386 AND SER-435</scope>
</reference>
<reference key="28">
    <citation type="journal article" date="2001" name="J. Clin. Endocrinol. Metab.">
        <title>Type 1 aldosterone synthase deficiency presenting in a middle-aged man.</title>
        <authorList>
            <person name="Kayes-Wandover K.M."/>
            <person name="Schindler R.E.L."/>
            <person name="Taylor H.C."/>
            <person name="White P.C."/>
        </authorList>
    </citation>
    <scope>VARIANT CMO-1 DEFICIENCY ARG-LEU-140 INS</scope>
</reference>
<reference key="29">
    <citation type="journal article" date="2003" name="J. Clin. Endocrinol. Metab.">
        <title>A compound heterozygote case of type II aldosterone synthase deficiency.</title>
        <authorList>
            <person name="Dunlop F.M."/>
            <person name="Crock P.A."/>
            <person name="Montalto J."/>
            <person name="Funder J.W."/>
            <person name="Curnow K.M."/>
        </authorList>
    </citation>
    <scope>VARIANTS CMO-2 DEFICIENCY ILE-185 AND ALA-498</scope>
</reference>
<feature type="transit peptide" description="Mitochondrion">
    <location>
        <begin position="1"/>
        <end position="24"/>
    </location>
</feature>
<feature type="chain" id="PRO_0000003597" description="Cytochrome P450 11B2, mitochondrial">
    <location>
        <begin position="25"/>
        <end position="503"/>
    </location>
</feature>
<feature type="binding site" evidence="17 39">
    <location>
        <position position="381"/>
    </location>
    <ligand>
        <name>21-hydroxyprogesterone</name>
        <dbReference type="ChEBI" id="CHEBI:16973"/>
    </ligand>
</feature>
<feature type="binding site" description="axial binding residue" evidence="17 39 40">
    <location>
        <position position="450"/>
    </location>
    <ligand>
        <name>heme</name>
        <dbReference type="ChEBI" id="CHEBI:30413"/>
    </ligand>
    <ligandPart>
        <name>Fe</name>
        <dbReference type="ChEBI" id="CHEBI:18248"/>
    </ligandPart>
</feature>
<feature type="sequence variant" id="VAR_014151" description="In dbSNP:rs6438." evidence="3">
    <original>A</original>
    <variation>T</variation>
    <location>
        <position position="29"/>
    </location>
</feature>
<feature type="sequence variant" id="VAR_014152" description="In dbSNP:rs6441." evidence="3">
    <original>R</original>
    <variation>Q</variation>
    <location>
        <position position="30"/>
    </location>
</feature>
<feature type="sequence variant" id="VAR_018470" description="In CMO-1 deficiency; the enzyme is inactive.">
    <original>N</original>
    <variation>NRL</variation>
    <location>
        <position position="140"/>
    </location>
</feature>
<feature type="sequence variant" id="VAR_001266" description="In dbSNP:rs4539." evidence="3 4 24">
    <original>K</original>
    <variation>R</variation>
    <location>
        <position position="173"/>
    </location>
</feature>
<feature type="sequence variant" id="VAR_001267" description="In CMO-2 deficiency; reduces 18-hydroxylase and abolishes 18-oxidase activities; leaves 11 beta-hydroxylase activity intact; dbSNP:rs28931609." evidence="9 12">
    <original>R</original>
    <variation>W</variation>
    <location>
        <position position="181"/>
    </location>
</feature>
<feature type="sequence variant" id="VAR_018471" description="In CMO-2 deficiency; dbSNP:rs121912978." evidence="8 21">
    <original>T</original>
    <variation>I</variation>
    <location>
        <position position="185"/>
    </location>
</feature>
<feature type="sequence variant" id="VAR_001268" description="In CMO-2 deficiency; associated in cis with A-386; slightly reduced 11-beta-hydroxylase activity, greatly decreased 18-hydroxylase activity and absent 18-oxidase activity when associated with A-386; dbSNP:rs104894072." evidence="23">
    <original>E</original>
    <variation>D</variation>
    <location>
        <position position="198"/>
    </location>
</feature>
<feature type="sequence variant" id="VAR_014643" description="In dbSNP:rs5308.">
    <original>N</original>
    <variation>T</variation>
    <location>
        <position position="222"/>
    </location>
</feature>
<feature type="sequence variant" id="VAR_014153" description="In dbSNP:rs4547." evidence="3 4">
    <original>I</original>
    <variation>T</variation>
    <location>
        <position position="248"/>
    </location>
</feature>
<feature type="sequence variant" id="VAR_014154" description="In dbSNP:rs4537." evidence="3 4">
    <original>N</original>
    <variation>S</variation>
    <location>
        <position position="281"/>
    </location>
</feature>
<feature type="sequence variant" id="VAR_014155" description="In dbSNP:rs4544." evidence="3 4">
    <original>I</original>
    <variation>T</variation>
    <location>
        <position position="339"/>
    </location>
</feature>
<feature type="sequence variant" id="VAR_014644" description="In dbSNP:rs5312.">
    <original>E</original>
    <variation>V</variation>
    <location>
        <position position="383"/>
    </location>
</feature>
<feature type="sequence variant" id="VAR_001269" description="In CMO-2 deficiency; associated in cis with D-198; small but consistent reduction in the production of 18-hydroxycorticosterone; slightly reduced 11-beta-hydroxylase activity, greatly decreased 18-hydroxylase activity and absent 18-oxidase activity when associated with D-198; dbSNP:rs61757294." evidence="3 4 9 12 23">
    <original>V</original>
    <variation>A</variation>
    <location>
        <position position="386"/>
    </location>
</feature>
<feature type="sequence variant" id="VAR_014645" description="In dbSNP:rs5315.">
    <original>V</original>
    <variation>E</variation>
    <location>
        <position position="403"/>
    </location>
</feature>
<feature type="sequence variant" id="VAR_014156" description="In dbSNP:rs4545." evidence="3 4">
    <original>G</original>
    <variation>S</variation>
    <location>
        <position position="435"/>
    </location>
</feature>
<feature type="sequence variant" id="VAR_018472" description="In CMO-1 deficiency; abolishes the 18-hydroxylase activity required for conversion of 11-deoxycorticosterone to aldosterone; dbSNP:rs72554627." evidence="20">
    <original>L</original>
    <variation>P</variation>
    <location>
        <position position="461"/>
    </location>
</feature>
<feature type="sequence variant" id="VAR_014646" description="In dbSNP:rs5317.">
    <original>F</original>
    <variation>V</variation>
    <location>
        <position position="487"/>
    </location>
</feature>
<feature type="sequence variant" id="VAR_018473" description="In CMO-2 deficiency; dbSNP:rs72554626." evidence="8">
    <original>T</original>
    <variation>A</variation>
    <location>
        <position position="498"/>
    </location>
</feature>
<feature type="mutagenesis site" description="Increases 11-beta- and 18-hydroxylase activities toward 11-deoxycorticosterone; increases 11-beta-hydroxylase activity toward 11-deoxycortisol." evidence="6">
    <original>I</original>
    <variation>P</variation>
    <location>
        <position position="112"/>
    </location>
</feature>
<feature type="mutagenesis site" description="Increases 11-beta-hydroxylase activity toward 11-deoxycorticosterone and 11-deoxycortisol." evidence="6">
    <original>D</original>
    <variation>E</variation>
    <location>
        <position position="147"/>
    </location>
</feature>
<feature type="mutagenesis site" description="No significant effect on hydroxylase activities toward 11-deoxycorticosterone and 11-deoxycortisol." evidence="6">
    <original>K</original>
    <variation>N</variation>
    <location>
        <position position="152"/>
    </location>
</feature>
<feature type="sequence conflict" description="In Ref. 1; AAA35741." evidence="29" ref="1">
    <original>S</original>
    <variation>C</variation>
    <location>
        <position position="17"/>
    </location>
</feature>
<feature type="sequence conflict" description="In Ref. 1; AAA35741." evidence="29" ref="1">
    <original>I</original>
    <variation>M</variation>
    <location>
        <position position="55"/>
    </location>
</feature>
<feature type="sequence conflict" description="In Ref. 1; AAA35741." evidence="29" ref="1">
    <original>Y</original>
    <variation>I</variation>
    <location>
        <position position="119"/>
    </location>
</feature>
<feature type="sequence conflict" description="In Ref. 2; CAA38539." evidence="29" ref="2">
    <original>S</original>
    <variation>R</variation>
    <location>
        <position position="249"/>
    </location>
</feature>
<feature type="sequence conflict" description="In Ref. 1; AAA35741." evidence="29" ref="1">
    <original>Q</original>
    <variation>K</variation>
    <location>
        <position position="342"/>
    </location>
</feature>
<feature type="sequence conflict" description="In Ref. 1; AAA35741." evidence="29" ref="1">
    <original>F</original>
    <variation>L</variation>
    <location>
        <position position="438"/>
    </location>
</feature>
<feature type="sequence conflict" description="In Ref. 1; AAA35741." evidence="29" ref="1">
    <original>H</original>
    <variation>R</variation>
    <location>
        <position position="470"/>
    </location>
</feature>
<feature type="helix" evidence="41">
    <location>
        <begin position="38"/>
        <end position="40"/>
    </location>
</feature>
<feature type="helix" evidence="41">
    <location>
        <begin position="48"/>
        <end position="58"/>
    </location>
</feature>
<feature type="helix" evidence="41">
    <location>
        <begin position="64"/>
        <end position="75"/>
    </location>
</feature>
<feature type="strand" evidence="41">
    <location>
        <begin position="77"/>
        <end position="80"/>
    </location>
</feature>
<feature type="strand" evidence="41">
    <location>
        <begin position="84"/>
        <end position="86"/>
    </location>
</feature>
<feature type="strand" evidence="41">
    <location>
        <begin position="88"/>
        <end position="91"/>
    </location>
</feature>
<feature type="helix" evidence="41">
    <location>
        <begin position="94"/>
        <end position="103"/>
    </location>
</feature>
<feature type="helix" evidence="41">
    <location>
        <begin position="114"/>
        <end position="123"/>
    </location>
</feature>
<feature type="helix" evidence="41">
    <location>
        <begin position="129"/>
        <end position="131"/>
    </location>
</feature>
<feature type="helix" evidence="41">
    <location>
        <begin position="134"/>
        <end position="142"/>
    </location>
</feature>
<feature type="helix" evidence="41">
    <location>
        <begin position="145"/>
        <end position="148"/>
    </location>
</feature>
<feature type="helix" evidence="41">
    <location>
        <begin position="151"/>
        <end position="178"/>
    </location>
</feature>
<feature type="strand" evidence="41">
    <location>
        <begin position="182"/>
        <end position="186"/>
    </location>
</feature>
<feature type="helix" evidence="41">
    <location>
        <begin position="189"/>
        <end position="205"/>
    </location>
</feature>
<feature type="strand" evidence="41">
    <location>
        <begin position="212"/>
        <end position="214"/>
    </location>
</feature>
<feature type="helix" evidence="41">
    <location>
        <begin position="218"/>
        <end position="238"/>
    </location>
</feature>
<feature type="helix" evidence="41">
    <location>
        <begin position="242"/>
        <end position="248"/>
    </location>
</feature>
<feature type="helix" evidence="41">
    <location>
        <begin position="250"/>
        <end position="280"/>
    </location>
</feature>
<feature type="helix" evidence="41">
    <location>
        <begin position="289"/>
        <end position="296"/>
    </location>
</feature>
<feature type="helix" evidence="41">
    <location>
        <begin position="301"/>
        <end position="313"/>
    </location>
</feature>
<feature type="helix" evidence="41">
    <location>
        <begin position="317"/>
        <end position="332"/>
    </location>
</feature>
<feature type="helix" evidence="41">
    <location>
        <begin position="334"/>
        <end position="353"/>
    </location>
</feature>
<feature type="helix" evidence="41">
    <location>
        <begin position="355"/>
        <end position="357"/>
    </location>
</feature>
<feature type="helix" evidence="41">
    <location>
        <begin position="358"/>
        <end position="361"/>
    </location>
</feature>
<feature type="helix" evidence="41">
    <location>
        <begin position="363"/>
        <end position="375"/>
    </location>
</feature>
<feature type="strand" evidence="41">
    <location>
        <begin position="381"/>
        <end position="385"/>
    </location>
</feature>
<feature type="strand" evidence="41">
    <location>
        <begin position="390"/>
        <end position="392"/>
    </location>
</feature>
<feature type="strand" evidence="41">
    <location>
        <begin position="395"/>
        <end position="397"/>
    </location>
</feature>
<feature type="strand" evidence="41">
    <location>
        <begin position="402"/>
        <end position="406"/>
    </location>
</feature>
<feature type="helix" evidence="41">
    <location>
        <begin position="407"/>
        <end position="410"/>
    </location>
</feature>
<feature type="turn" evidence="41">
    <location>
        <begin position="414"/>
        <end position="416"/>
    </location>
</feature>
<feature type="strand" evidence="41">
    <location>
        <begin position="417"/>
        <end position="419"/>
    </location>
</feature>
<feature type="helix" evidence="41">
    <location>
        <begin position="427"/>
        <end position="430"/>
    </location>
</feature>
<feature type="helix" evidence="42">
    <location>
        <begin position="446"/>
        <end position="448"/>
    </location>
</feature>
<feature type="helix" evidence="41">
    <location>
        <begin position="453"/>
        <end position="470"/>
    </location>
</feature>
<feature type="strand" evidence="41">
    <location>
        <begin position="471"/>
        <end position="474"/>
    </location>
</feature>
<feature type="strand" evidence="41">
    <location>
        <begin position="483"/>
        <end position="493"/>
    </location>
</feature>
<feature type="strand" evidence="41">
    <location>
        <begin position="497"/>
        <end position="501"/>
    </location>
</feature>
<evidence type="ECO:0000250" key="1">
    <source>
        <dbReference type="UniProtKB" id="P14137"/>
    </source>
</evidence>
<evidence type="ECO:0000250" key="2">
    <source>
        <dbReference type="UniProtKB" id="P30099"/>
    </source>
</evidence>
<evidence type="ECO:0000269" key="3">
    <source>
    </source>
</evidence>
<evidence type="ECO:0000269" key="4">
    <source>
    </source>
</evidence>
<evidence type="ECO:0000269" key="5">
    <source>
    </source>
</evidence>
<evidence type="ECO:0000269" key="6">
    <source>
    </source>
</evidence>
<evidence type="ECO:0000269" key="7">
    <source>
    </source>
</evidence>
<evidence type="ECO:0000269" key="8">
    <source>
    </source>
</evidence>
<evidence type="ECO:0000269" key="9">
    <source>
    </source>
</evidence>
<evidence type="ECO:0000269" key="10">
    <source>
    </source>
</evidence>
<evidence type="ECO:0000269" key="11">
    <source>
    </source>
</evidence>
<evidence type="ECO:0000269" key="12">
    <source>
    </source>
</evidence>
<evidence type="ECO:0000269" key="13">
    <source>
    </source>
</evidence>
<evidence type="ECO:0000269" key="14">
    <source>
    </source>
</evidence>
<evidence type="ECO:0000269" key="15">
    <source>
    </source>
</evidence>
<evidence type="ECO:0000269" key="16">
    <source>
    </source>
</evidence>
<evidence type="ECO:0000269" key="17">
    <source>
    </source>
</evidence>
<evidence type="ECO:0000269" key="18">
    <source>
    </source>
</evidence>
<evidence type="ECO:0000269" key="19">
    <source>
    </source>
</evidence>
<evidence type="ECO:0000269" key="20">
    <source>
    </source>
</evidence>
<evidence type="ECO:0000269" key="21">
    <source>
    </source>
</evidence>
<evidence type="ECO:0000269" key="22">
    <source>
    </source>
</evidence>
<evidence type="ECO:0000269" key="23">
    <source>
    </source>
</evidence>
<evidence type="ECO:0000269" key="24">
    <source>
    </source>
</evidence>
<evidence type="ECO:0000303" key="25">
    <source>
    </source>
</evidence>
<evidence type="ECO:0000303" key="26">
    <source>
    </source>
</evidence>
<evidence type="ECO:0000303" key="27">
    <source>
    </source>
</evidence>
<evidence type="ECO:0000303" key="28">
    <source>
    </source>
</evidence>
<evidence type="ECO:0000305" key="29"/>
<evidence type="ECO:0000305" key="30">
    <source>
    </source>
</evidence>
<evidence type="ECO:0000305" key="31">
    <source>
    </source>
</evidence>
<evidence type="ECO:0000305" key="32">
    <source>
    </source>
</evidence>
<evidence type="ECO:0000305" key="33">
    <source>
    </source>
</evidence>
<evidence type="ECO:0000305" key="34">
    <source>
    </source>
</evidence>
<evidence type="ECO:0000305" key="35">
    <source>
    </source>
</evidence>
<evidence type="ECO:0000305" key="36">
    <source>
    </source>
</evidence>
<evidence type="ECO:0000305" key="37">
    <source>
    </source>
</evidence>
<evidence type="ECO:0000312" key="38">
    <source>
        <dbReference type="HGNC" id="HGNC:2592"/>
    </source>
</evidence>
<evidence type="ECO:0007744" key="39">
    <source>
        <dbReference type="PDB" id="4DVQ"/>
    </source>
</evidence>
<evidence type="ECO:0007744" key="40">
    <source>
        <dbReference type="PDB" id="4FDH"/>
    </source>
</evidence>
<evidence type="ECO:0007829" key="41">
    <source>
        <dbReference type="PDB" id="4DVQ"/>
    </source>
</evidence>
<evidence type="ECO:0007829" key="42">
    <source>
        <dbReference type="PDB" id="4FDH"/>
    </source>
</evidence>
<accession>P19099</accession>
<accession>B0ZBE4</accession>
<accession>Q16726</accession>
<gene>
    <name evidence="25 38" type="primary">CYP11B2</name>
</gene>
<proteinExistence type="evidence at protein level"/>